<sequence length="638" mass="68461">MGKIIGIDLGTTNSCVSVLENGKAKVIENAEGARTTPSIIAYANDGEILVGQSAKRQAVTNPHNTLFAVKRLIGRRFEEEVVQKDIKLVPYKIVKANNGDAWVEASGKQMAPPQISAEVLKKMKKTAEDYLGEAVTEAVITVPAYFNDSQRQATKDAGRIAGLDVKRIINEPTAAALAYGMDKAKGDHTVIVYDLGGGTFDVSVIEIAEVDGEHQFEVLATNGDTFLGGEDFDMRLIDYLVDEFKKESGMDLKNDPLALQRLKEAAEKAKIELSSSQSTDVNLPYITADATGPKHLNVKISRAKLESLVEDLVTRTIEPCRIALKDAGIDASKIDDVILVGGQTRMPMVQKAVSDFFGKEARKDVNPDEAVAMGAAIQGAVLAGDVKDVLLLDVSPLTLGIETMGGVMTALIEKNTTIPTKKSQVFSTADDNQGAVTIHVLQGERKQAAQNKSLGKFDLADIPPAPRGVPQIEVTFDIDANGILHVGAKDKATGKEQKITIKANSGLSDEEIQKMVRDAELNAEEDRKFEELAAARNQGDALVHSTRKMIADAGDKVTAEEKTAIEAAVVALEAAVKGDDKAAIDAKVEELSKVSAPVAQKMYAEQAQPAEGAAPHDEKAEKADDVVDAEFEEVKDHK</sequence>
<proteinExistence type="inferred from homology"/>
<accession>Q3KIA0</accession>
<name>DNAK_PSEPF</name>
<protein>
    <recommendedName>
        <fullName evidence="1">Chaperone protein DnaK</fullName>
    </recommendedName>
    <alternativeName>
        <fullName evidence="1">HSP70</fullName>
    </alternativeName>
    <alternativeName>
        <fullName evidence="1">Heat shock 70 kDa protein</fullName>
    </alternativeName>
    <alternativeName>
        <fullName evidence="1">Heat shock protein 70</fullName>
    </alternativeName>
</protein>
<evidence type="ECO:0000255" key="1">
    <source>
        <dbReference type="HAMAP-Rule" id="MF_00332"/>
    </source>
</evidence>
<evidence type="ECO:0000256" key="2">
    <source>
        <dbReference type="SAM" id="MobiDB-lite"/>
    </source>
</evidence>
<organism>
    <name type="scientific">Pseudomonas fluorescens (strain Pf0-1)</name>
    <dbReference type="NCBI Taxonomy" id="205922"/>
    <lineage>
        <taxon>Bacteria</taxon>
        <taxon>Pseudomonadati</taxon>
        <taxon>Pseudomonadota</taxon>
        <taxon>Gammaproteobacteria</taxon>
        <taxon>Pseudomonadales</taxon>
        <taxon>Pseudomonadaceae</taxon>
        <taxon>Pseudomonas</taxon>
    </lineage>
</organism>
<gene>
    <name evidence="1" type="primary">dnaK</name>
    <name type="ordered locus">Pfl01_0763</name>
</gene>
<dbReference type="EMBL" id="CP000094">
    <property type="protein sequence ID" value="ABA72506.1"/>
    <property type="molecule type" value="Genomic_DNA"/>
</dbReference>
<dbReference type="RefSeq" id="WP_011332395.1">
    <property type="nucleotide sequence ID" value="NC_007492.2"/>
</dbReference>
<dbReference type="SMR" id="Q3KIA0"/>
<dbReference type="KEGG" id="pfo:Pfl01_0763"/>
<dbReference type="eggNOG" id="COG0443">
    <property type="taxonomic scope" value="Bacteria"/>
</dbReference>
<dbReference type="HOGENOM" id="CLU_005965_2_1_6"/>
<dbReference type="Proteomes" id="UP000002704">
    <property type="component" value="Chromosome"/>
</dbReference>
<dbReference type="GO" id="GO:0005524">
    <property type="term" value="F:ATP binding"/>
    <property type="evidence" value="ECO:0007669"/>
    <property type="project" value="UniProtKB-UniRule"/>
</dbReference>
<dbReference type="GO" id="GO:0140662">
    <property type="term" value="F:ATP-dependent protein folding chaperone"/>
    <property type="evidence" value="ECO:0007669"/>
    <property type="project" value="InterPro"/>
</dbReference>
<dbReference type="GO" id="GO:0051082">
    <property type="term" value="F:unfolded protein binding"/>
    <property type="evidence" value="ECO:0007669"/>
    <property type="project" value="InterPro"/>
</dbReference>
<dbReference type="CDD" id="cd10234">
    <property type="entry name" value="ASKHA_NBD_HSP70_DnaK-like"/>
    <property type="match status" value="1"/>
</dbReference>
<dbReference type="FunFam" id="2.60.34.10:FF:000014">
    <property type="entry name" value="Chaperone protein DnaK HSP70"/>
    <property type="match status" value="1"/>
</dbReference>
<dbReference type="FunFam" id="1.20.1270.10:FF:000001">
    <property type="entry name" value="Molecular chaperone DnaK"/>
    <property type="match status" value="1"/>
</dbReference>
<dbReference type="FunFam" id="3.30.420.40:FF:000004">
    <property type="entry name" value="Molecular chaperone DnaK"/>
    <property type="match status" value="1"/>
</dbReference>
<dbReference type="FunFam" id="3.90.640.10:FF:000003">
    <property type="entry name" value="Molecular chaperone DnaK"/>
    <property type="match status" value="1"/>
</dbReference>
<dbReference type="Gene3D" id="1.20.1270.10">
    <property type="match status" value="1"/>
</dbReference>
<dbReference type="Gene3D" id="3.30.420.40">
    <property type="match status" value="2"/>
</dbReference>
<dbReference type="Gene3D" id="3.90.640.10">
    <property type="entry name" value="Actin, Chain A, domain 4"/>
    <property type="match status" value="1"/>
</dbReference>
<dbReference type="Gene3D" id="2.60.34.10">
    <property type="entry name" value="Substrate Binding Domain Of DNAk, Chain A, domain 1"/>
    <property type="match status" value="1"/>
</dbReference>
<dbReference type="HAMAP" id="MF_00332">
    <property type="entry name" value="DnaK"/>
    <property type="match status" value="1"/>
</dbReference>
<dbReference type="InterPro" id="IPR043129">
    <property type="entry name" value="ATPase_NBD"/>
</dbReference>
<dbReference type="InterPro" id="IPR012725">
    <property type="entry name" value="Chaperone_DnaK"/>
</dbReference>
<dbReference type="InterPro" id="IPR018181">
    <property type="entry name" value="Heat_shock_70_CS"/>
</dbReference>
<dbReference type="InterPro" id="IPR029048">
    <property type="entry name" value="HSP70_C_sf"/>
</dbReference>
<dbReference type="InterPro" id="IPR029047">
    <property type="entry name" value="HSP70_peptide-bd_sf"/>
</dbReference>
<dbReference type="InterPro" id="IPR013126">
    <property type="entry name" value="Hsp_70_fam"/>
</dbReference>
<dbReference type="NCBIfam" id="NF001413">
    <property type="entry name" value="PRK00290.1"/>
    <property type="match status" value="1"/>
</dbReference>
<dbReference type="NCBIfam" id="NF003520">
    <property type="entry name" value="PRK05183.1"/>
    <property type="match status" value="1"/>
</dbReference>
<dbReference type="NCBIfam" id="TIGR02350">
    <property type="entry name" value="prok_dnaK"/>
    <property type="match status" value="1"/>
</dbReference>
<dbReference type="PANTHER" id="PTHR19375">
    <property type="entry name" value="HEAT SHOCK PROTEIN 70KDA"/>
    <property type="match status" value="1"/>
</dbReference>
<dbReference type="Pfam" id="PF00012">
    <property type="entry name" value="HSP70"/>
    <property type="match status" value="1"/>
</dbReference>
<dbReference type="PRINTS" id="PR00301">
    <property type="entry name" value="HEATSHOCK70"/>
</dbReference>
<dbReference type="SUPFAM" id="SSF53067">
    <property type="entry name" value="Actin-like ATPase domain"/>
    <property type="match status" value="2"/>
</dbReference>
<dbReference type="SUPFAM" id="SSF100934">
    <property type="entry name" value="Heat shock protein 70kD (HSP70), C-terminal subdomain"/>
    <property type="match status" value="1"/>
</dbReference>
<dbReference type="SUPFAM" id="SSF100920">
    <property type="entry name" value="Heat shock protein 70kD (HSP70), peptide-binding domain"/>
    <property type="match status" value="1"/>
</dbReference>
<dbReference type="PROSITE" id="PS00297">
    <property type="entry name" value="HSP70_1"/>
    <property type="match status" value="1"/>
</dbReference>
<dbReference type="PROSITE" id="PS00329">
    <property type="entry name" value="HSP70_2"/>
    <property type="match status" value="1"/>
</dbReference>
<dbReference type="PROSITE" id="PS01036">
    <property type="entry name" value="HSP70_3"/>
    <property type="match status" value="1"/>
</dbReference>
<feature type="chain" id="PRO_0000225997" description="Chaperone protein DnaK">
    <location>
        <begin position="1"/>
        <end position="638"/>
    </location>
</feature>
<feature type="region of interest" description="Disordered" evidence="2">
    <location>
        <begin position="602"/>
        <end position="638"/>
    </location>
</feature>
<feature type="compositionally biased region" description="Low complexity" evidence="2">
    <location>
        <begin position="604"/>
        <end position="613"/>
    </location>
</feature>
<feature type="compositionally biased region" description="Basic and acidic residues" evidence="2">
    <location>
        <begin position="614"/>
        <end position="625"/>
    </location>
</feature>
<feature type="modified residue" description="Phosphothreonine; by autocatalysis" evidence="1">
    <location>
        <position position="199"/>
    </location>
</feature>
<reference key="1">
    <citation type="journal article" date="2009" name="Genome Biol.">
        <title>Genomic and genetic analyses of diversity and plant interactions of Pseudomonas fluorescens.</title>
        <authorList>
            <person name="Silby M.W."/>
            <person name="Cerdeno-Tarraga A.M."/>
            <person name="Vernikos G.S."/>
            <person name="Giddens S.R."/>
            <person name="Jackson R.W."/>
            <person name="Preston G.M."/>
            <person name="Zhang X.-X."/>
            <person name="Moon C.D."/>
            <person name="Gehrig S.M."/>
            <person name="Godfrey S.A.C."/>
            <person name="Knight C.G."/>
            <person name="Malone J.G."/>
            <person name="Robinson Z."/>
            <person name="Spiers A.J."/>
            <person name="Harris S."/>
            <person name="Challis G.L."/>
            <person name="Yaxley A.M."/>
            <person name="Harris D."/>
            <person name="Seeger K."/>
            <person name="Murphy L."/>
            <person name="Rutter S."/>
            <person name="Squares R."/>
            <person name="Quail M.A."/>
            <person name="Saunders E."/>
            <person name="Mavromatis K."/>
            <person name="Brettin T.S."/>
            <person name="Bentley S.D."/>
            <person name="Hothersall J."/>
            <person name="Stephens E."/>
            <person name="Thomas C.M."/>
            <person name="Parkhill J."/>
            <person name="Levy S.B."/>
            <person name="Rainey P.B."/>
            <person name="Thomson N.R."/>
        </authorList>
    </citation>
    <scope>NUCLEOTIDE SEQUENCE [LARGE SCALE GENOMIC DNA]</scope>
    <source>
        <strain>Pf0-1</strain>
    </source>
</reference>
<keyword id="KW-0067">ATP-binding</keyword>
<keyword id="KW-0143">Chaperone</keyword>
<keyword id="KW-0547">Nucleotide-binding</keyword>
<keyword id="KW-0597">Phosphoprotein</keyword>
<keyword id="KW-0346">Stress response</keyword>
<comment type="function">
    <text evidence="1">Acts as a chaperone.</text>
</comment>
<comment type="induction">
    <text evidence="1">By stress conditions e.g. heat shock.</text>
</comment>
<comment type="similarity">
    <text evidence="1">Belongs to the heat shock protein 70 family.</text>
</comment>